<gene>
    <name type="primary">rfbA</name>
</gene>
<sequence length="260" mass="29688">MIRLVRELYQYRGLLISLVQRELKARYRGSFLGFLWTFLNPTLHMLVYVLLFTVVMRQNIPNFPFFMFVGLLPWIWFSTSVGGGASAISDRRDLLTKVRFPAQVLPTSVVVTNLCNFVLSLPLMLVLGMAYGQWPTWHVVLFPVVVLIQLTFTLALTYILAAINVTFRDLQHIVSNLLTLWFFATPVLYPLSTIQDESARSLMLALNPMVSLMTSYQAIFYEHRLPDAEPLMALAAVSVVLLWAASSIFESRREEFAESI</sequence>
<dbReference type="EMBL" id="U36795">
    <property type="protein sequence ID" value="AAB05017.1"/>
    <property type="molecule type" value="Genomic_DNA"/>
</dbReference>
<dbReference type="PIR" id="T18554">
    <property type="entry name" value="T18554"/>
</dbReference>
<dbReference type="RefSeq" id="WP_011554618.1">
    <property type="nucleotide sequence ID" value="NZ_JABFNQ010000011.1"/>
</dbReference>
<dbReference type="SMR" id="Q50862"/>
<dbReference type="TCDB" id="3.A.1.103.3">
    <property type="family name" value="the atp-binding cassette (abc) superfamily"/>
</dbReference>
<dbReference type="OMA" id="GPLWYFI"/>
<dbReference type="GO" id="GO:0005886">
    <property type="term" value="C:plasma membrane"/>
    <property type="evidence" value="ECO:0007669"/>
    <property type="project" value="UniProtKB-SubCell"/>
</dbReference>
<dbReference type="GO" id="GO:0140359">
    <property type="term" value="F:ABC-type transporter activity"/>
    <property type="evidence" value="ECO:0007669"/>
    <property type="project" value="InterPro"/>
</dbReference>
<dbReference type="GO" id="GO:0015920">
    <property type="term" value="P:lipopolysaccharide transport"/>
    <property type="evidence" value="ECO:0007669"/>
    <property type="project" value="TreeGrafter"/>
</dbReference>
<dbReference type="GO" id="GO:0015774">
    <property type="term" value="P:polysaccharide transport"/>
    <property type="evidence" value="ECO:0007669"/>
    <property type="project" value="UniProtKB-KW"/>
</dbReference>
<dbReference type="InterPro" id="IPR013525">
    <property type="entry name" value="ABC2_TM"/>
</dbReference>
<dbReference type="InterPro" id="IPR047817">
    <property type="entry name" value="ABC2_TM_bact-type"/>
</dbReference>
<dbReference type="PANTHER" id="PTHR30413">
    <property type="entry name" value="INNER MEMBRANE TRANSPORT PERMEASE"/>
    <property type="match status" value="1"/>
</dbReference>
<dbReference type="PANTHER" id="PTHR30413:SF8">
    <property type="entry name" value="TRANSPORT PERMEASE PROTEIN"/>
    <property type="match status" value="1"/>
</dbReference>
<dbReference type="Pfam" id="PF01061">
    <property type="entry name" value="ABC2_membrane"/>
    <property type="match status" value="1"/>
</dbReference>
<dbReference type="PROSITE" id="PS51012">
    <property type="entry name" value="ABC_TM2"/>
    <property type="match status" value="1"/>
</dbReference>
<organism>
    <name type="scientific">Myxococcus xanthus</name>
    <dbReference type="NCBI Taxonomy" id="34"/>
    <lineage>
        <taxon>Bacteria</taxon>
        <taxon>Pseudomonadati</taxon>
        <taxon>Myxococcota</taxon>
        <taxon>Myxococcia</taxon>
        <taxon>Myxococcales</taxon>
        <taxon>Cystobacterineae</taxon>
        <taxon>Myxococcaceae</taxon>
        <taxon>Myxococcus</taxon>
    </lineage>
</organism>
<keyword id="KW-0997">Cell inner membrane</keyword>
<keyword id="KW-1003">Cell membrane</keyword>
<keyword id="KW-0472">Membrane</keyword>
<keyword id="KW-0625">Polysaccharide transport</keyword>
<keyword id="KW-0762">Sugar transport</keyword>
<keyword id="KW-0812">Transmembrane</keyword>
<keyword id="KW-1133">Transmembrane helix</keyword>
<keyword id="KW-0813">Transport</keyword>
<name>RFBA_MYXXA</name>
<reference key="1">
    <citation type="journal article" date="1996" name="J. Bacteriol.">
        <title>The Myxococcus xanthus rfbABC operon encodes an ATP-binding cassette transporter homolog required for O-antigen biosynthesis and multicellular development.</title>
        <authorList>
            <person name="Guo D."/>
            <person name="Bowden M.G."/>
            <person name="Pershad R."/>
            <person name="Kaplan H.B."/>
        </authorList>
    </citation>
    <scope>NUCLEOTIDE SEQUENCE [GENOMIC DNA]</scope>
    <source>
        <strain>DK6640</strain>
    </source>
</reference>
<feature type="chain" id="PRO_0000182994" description="O-antigen export system permease protein RfbA">
    <location>
        <begin position="1"/>
        <end position="260"/>
    </location>
</feature>
<feature type="transmembrane region" description="Helical" evidence="1">
    <location>
        <begin position="31"/>
        <end position="51"/>
    </location>
</feature>
<feature type="transmembrane region" description="Helical" evidence="1">
    <location>
        <begin position="63"/>
        <end position="83"/>
    </location>
</feature>
<feature type="transmembrane region" description="Helical" evidence="1">
    <location>
        <begin position="109"/>
        <end position="129"/>
    </location>
</feature>
<feature type="transmembrane region" description="Helical" evidence="1">
    <location>
        <begin position="139"/>
        <end position="159"/>
    </location>
</feature>
<feature type="transmembrane region" description="Helical" evidence="1">
    <location>
        <begin position="173"/>
        <end position="193"/>
    </location>
</feature>
<feature type="transmembrane region" description="Helical" evidence="1">
    <location>
        <begin position="201"/>
        <end position="221"/>
    </location>
</feature>
<feature type="transmembrane region" description="Helical" evidence="1">
    <location>
        <begin position="229"/>
        <end position="249"/>
    </location>
</feature>
<feature type="domain" description="ABC transmembrane type-2" evidence="2">
    <location>
        <begin position="32"/>
        <end position="252"/>
    </location>
</feature>
<comment type="function">
    <text>May form an ATP-driven O-antigen export apparatus, in association with RfbB.</text>
</comment>
<comment type="subcellular location">
    <subcellularLocation>
        <location evidence="3">Cell inner membrane</location>
        <topology evidence="3">Multi-pass membrane protein</topology>
    </subcellularLocation>
</comment>
<comment type="similarity">
    <text evidence="3">Belongs to the ABC-2 integral membrane protein family.</text>
</comment>
<protein>
    <recommendedName>
        <fullName>O-antigen export system permease protein RfbA</fullName>
    </recommendedName>
</protein>
<accession>Q50862</accession>
<evidence type="ECO:0000255" key="1"/>
<evidence type="ECO:0000255" key="2">
    <source>
        <dbReference type="PROSITE-ProRule" id="PRU00442"/>
    </source>
</evidence>
<evidence type="ECO:0000305" key="3"/>
<proteinExistence type="inferred from homology"/>